<protein>
    <recommendedName>
        <fullName>C-Jun-amino-terminal kinase-interacting protein 1</fullName>
        <shortName>JIP-1</shortName>
        <shortName>JNK-interacting protein 1</shortName>
    </recommendedName>
    <alternativeName>
        <fullName>Islet-brain 1</fullName>
        <shortName>IB-1</shortName>
    </alternativeName>
    <alternativeName>
        <fullName>JNK MAP kinase scaffold protein 1</fullName>
    </alternativeName>
    <alternativeName>
        <fullName>Mitogen-activated protein kinase 8-interacting protein 1</fullName>
    </alternativeName>
</protein>
<evidence type="ECO:0000250" key="1"/>
<evidence type="ECO:0000250" key="2">
    <source>
        <dbReference type="UniProtKB" id="Q9R237"/>
    </source>
</evidence>
<evidence type="ECO:0000250" key="3">
    <source>
        <dbReference type="UniProtKB" id="Q9WVI9"/>
    </source>
</evidence>
<evidence type="ECO:0000255" key="4">
    <source>
        <dbReference type="PROSITE-ProRule" id="PRU00148"/>
    </source>
</evidence>
<evidence type="ECO:0000255" key="5">
    <source>
        <dbReference type="PROSITE-ProRule" id="PRU00192"/>
    </source>
</evidence>
<evidence type="ECO:0000256" key="6">
    <source>
        <dbReference type="SAM" id="MobiDB-lite"/>
    </source>
</evidence>
<evidence type="ECO:0000269" key="7">
    <source>
    </source>
</evidence>
<evidence type="ECO:0000269" key="8">
    <source>
    </source>
</evidence>
<evidence type="ECO:0000269" key="9">
    <source>
    </source>
</evidence>
<evidence type="ECO:0000269" key="10">
    <source>
    </source>
</evidence>
<evidence type="ECO:0000269" key="11">
    <source>
    </source>
</evidence>
<evidence type="ECO:0000269" key="12">
    <source>
    </source>
</evidence>
<evidence type="ECO:0000269" key="13">
    <source>
    </source>
</evidence>
<evidence type="ECO:0000269" key="14">
    <source>
    </source>
</evidence>
<evidence type="ECO:0000269" key="15">
    <source>
    </source>
</evidence>
<evidence type="ECO:0000305" key="16"/>
<evidence type="ECO:0007829" key="17">
    <source>
        <dbReference type="PDB" id="8RPP"/>
    </source>
</evidence>
<feature type="chain" id="PRO_0000220628" description="C-Jun-amino-terminal kinase-interacting protein 1">
    <location>
        <begin position="1"/>
        <end position="711"/>
    </location>
</feature>
<feature type="domain" description="SH3" evidence="5">
    <location>
        <begin position="488"/>
        <end position="549"/>
    </location>
</feature>
<feature type="domain" description="PID" evidence="4">
    <location>
        <begin position="561"/>
        <end position="700"/>
    </location>
</feature>
<feature type="region of interest" description="Disordered" evidence="6">
    <location>
        <begin position="1"/>
        <end position="27"/>
    </location>
</feature>
<feature type="region of interest" description="Disordered" evidence="6">
    <location>
        <begin position="78"/>
        <end position="371"/>
    </location>
</feature>
<feature type="region of interest" description="JNK-binding domain (JBD)">
    <location>
        <begin position="127"/>
        <end position="285"/>
    </location>
</feature>
<feature type="region of interest" description="Minimal inhibitory domain (MID)">
    <location>
        <begin position="157"/>
        <end position="176"/>
    </location>
</feature>
<feature type="region of interest" description="Interaction with MAP3K7" evidence="14">
    <location>
        <begin position="283"/>
        <end position="471"/>
    </location>
</feature>
<feature type="region of interest" description="Disordered" evidence="6">
    <location>
        <begin position="429"/>
        <end position="451"/>
    </location>
</feature>
<feature type="region of interest" description="Interaction with VRK2" evidence="15">
    <location>
        <begin position="471"/>
        <end position="660"/>
    </location>
</feature>
<feature type="short sequence motif" description="D-box 1">
    <location>
        <begin position="353"/>
        <end position="360"/>
    </location>
</feature>
<feature type="short sequence motif" description="D-box 2">
    <location>
        <begin position="364"/>
        <end position="372"/>
    </location>
</feature>
<feature type="compositionally biased region" description="Low complexity" evidence="6">
    <location>
        <begin position="14"/>
        <end position="25"/>
    </location>
</feature>
<feature type="compositionally biased region" description="Acidic residues" evidence="6">
    <location>
        <begin position="105"/>
        <end position="116"/>
    </location>
</feature>
<feature type="compositionally biased region" description="Low complexity" evidence="6">
    <location>
        <begin position="139"/>
        <end position="149"/>
    </location>
</feature>
<feature type="compositionally biased region" description="Polar residues" evidence="6">
    <location>
        <begin position="162"/>
        <end position="182"/>
    </location>
</feature>
<feature type="compositionally biased region" description="Polar residues" evidence="6">
    <location>
        <begin position="194"/>
        <end position="204"/>
    </location>
</feature>
<feature type="compositionally biased region" description="Polar residues" evidence="6">
    <location>
        <begin position="228"/>
        <end position="244"/>
    </location>
</feature>
<feature type="compositionally biased region" description="Basic and acidic residues" evidence="6">
    <location>
        <begin position="267"/>
        <end position="277"/>
    </location>
</feature>
<feature type="modified residue" description="Phosphoserine" evidence="3">
    <location>
        <position position="15"/>
    </location>
</feature>
<feature type="modified residue" description="Phosphoserine" evidence="3">
    <location>
        <position position="29"/>
    </location>
</feature>
<feature type="modified residue" description="Phosphoserine" evidence="13">
    <location>
        <position position="40"/>
    </location>
</feature>
<feature type="modified residue" description="Phosphothreonine; by MAPK8, MAPK9 and MAPK10" evidence="12">
    <location>
        <position position="103"/>
    </location>
</feature>
<feature type="modified residue" description="Phosphoserine" evidence="13">
    <location>
        <position position="152"/>
    </location>
</feature>
<feature type="modified residue" description="Phosphoserine" evidence="13">
    <location>
        <position position="181"/>
    </location>
</feature>
<feature type="modified residue" description="Phosphoserine" evidence="13">
    <location>
        <position position="187"/>
    </location>
</feature>
<feature type="modified residue" description="Phosphoserine" evidence="13">
    <location>
        <position position="193"/>
    </location>
</feature>
<feature type="modified residue" description="Phosphoserine" evidence="13">
    <location>
        <position position="195"/>
    </location>
</feature>
<feature type="modified residue" description="Phosphoserine" evidence="13">
    <location>
        <position position="196"/>
    </location>
</feature>
<feature type="modified residue" description="Phosphothreonine; by MAPK8, MAPK9 and MAPK10" evidence="12">
    <location>
        <position position="205"/>
    </location>
</feature>
<feature type="modified residue" description="Phosphoserine" evidence="13">
    <location>
        <position position="214"/>
    </location>
</feature>
<feature type="modified residue" description="Phosphoserine" evidence="13">
    <location>
        <position position="311"/>
    </location>
</feature>
<feature type="modified residue" description="Phosphoserine" evidence="13">
    <location>
        <position position="328"/>
    </location>
</feature>
<feature type="modified residue" description="Phosphoserine" evidence="13">
    <location>
        <position position="330"/>
    </location>
</feature>
<feature type="modified residue" description="Phosphoserine" evidence="13">
    <location>
        <position position="340"/>
    </location>
</feature>
<feature type="modified residue" description="Phosphoserine" evidence="13">
    <location>
        <position position="355"/>
    </location>
</feature>
<feature type="modified residue" description="Phosphoserine" evidence="13">
    <location>
        <position position="366"/>
    </location>
</feature>
<feature type="modified residue" description="Phosphoserine" evidence="13">
    <location>
        <position position="369"/>
    </location>
</feature>
<feature type="modified residue" description="Phosphoserine" evidence="13">
    <location>
        <position position="407"/>
    </location>
</feature>
<feature type="modified residue" description="Phosphoserine" evidence="13">
    <location>
        <position position="409"/>
    </location>
</feature>
<feature type="modified residue" description="Phosphothreonine" evidence="13">
    <location>
        <position position="411"/>
    </location>
</feature>
<feature type="modified residue" description="Phosphoserine" evidence="13">
    <location>
        <position position="444"/>
    </location>
</feature>
<feature type="modified residue" description="Phosphoserine" evidence="13">
    <location>
        <position position="447"/>
    </location>
</feature>
<feature type="modified residue" description="Phosphothreonine" evidence="13">
    <location>
        <position position="448"/>
    </location>
</feature>
<feature type="modified residue" description="Phosphoserine" evidence="13">
    <location>
        <position position="469"/>
    </location>
</feature>
<feature type="modified residue" description="Phosphoserine" evidence="13">
    <location>
        <position position="471"/>
    </location>
</feature>
<feature type="modified residue" description="Phosphoserine" evidence="13">
    <location>
        <position position="472"/>
    </location>
</feature>
<feature type="modified residue" description="Phosphoserine" evidence="13">
    <location>
        <position position="473"/>
    </location>
</feature>
<feature type="sequence variant" id="VAR_012243" description="In T2D; risk factor; dbSNP:rs119489103." evidence="8">
    <original>S</original>
    <variation>N</variation>
    <location>
        <position position="59"/>
    </location>
</feature>
<feature type="sequence variant" id="VAR_049664" description="In dbSNP:rs34420676.">
    <original>A</original>
    <variation>V</variation>
    <location>
        <position position="322"/>
    </location>
</feature>
<feature type="sequence variant" id="VAR_049665" description="In dbSNP:rs12295161.">
    <original>R</original>
    <variation>Q</variation>
    <location>
        <position position="353"/>
    </location>
</feature>
<feature type="mutagenesis site" description="Abolishes MAPK9 interaction." evidence="12">
    <original>R</original>
    <variation>G</variation>
    <location>
        <position position="160"/>
    </location>
</feature>
<feature type="mutagenesis site" description="Abolishes MAPK9 interaction." evidence="12">
    <original>P</original>
    <variation>G</variation>
    <location>
        <position position="161"/>
    </location>
</feature>
<feature type="mutagenesis site" description="No effect on KNS2 binding." evidence="9">
    <original>P</original>
    <variation>A</variation>
    <location>
        <position position="704"/>
    </location>
</feature>
<feature type="mutagenesis site" description="Abolishes KNS2 binding." evidence="9">
    <original>Y</original>
    <variation>A</variation>
    <location>
        <position position="709"/>
    </location>
</feature>
<feature type="strand" evidence="17">
    <location>
        <begin position="493"/>
        <end position="495"/>
    </location>
</feature>
<feature type="strand" evidence="17">
    <location>
        <begin position="514"/>
        <end position="520"/>
    </location>
</feature>
<feature type="strand" evidence="17">
    <location>
        <begin position="524"/>
        <end position="530"/>
    </location>
</feature>
<feature type="turn" evidence="17">
    <location>
        <begin position="531"/>
        <end position="533"/>
    </location>
</feature>
<feature type="strand" evidence="17">
    <location>
        <begin position="536"/>
        <end position="540"/>
    </location>
</feature>
<feature type="helix" evidence="17">
    <location>
        <begin position="541"/>
        <end position="543"/>
    </location>
</feature>
<feature type="strand" evidence="17">
    <location>
        <begin position="544"/>
        <end position="546"/>
    </location>
</feature>
<gene>
    <name type="primary">MAPK8IP1</name>
    <name type="synonym">IB1</name>
    <name type="synonym">JIP1</name>
    <name type="synonym">PRKM8IP</name>
</gene>
<dbReference type="EMBL" id="AF074091">
    <property type="protein sequence ID" value="AAD20443.1"/>
    <property type="molecule type" value="mRNA"/>
</dbReference>
<dbReference type="EMBL" id="CH471064">
    <property type="protein sequence ID" value="EAW68027.1"/>
    <property type="molecule type" value="Genomic_DNA"/>
</dbReference>
<dbReference type="EMBL" id="CH471064">
    <property type="protein sequence ID" value="EAW68028.1"/>
    <property type="molecule type" value="Genomic_DNA"/>
</dbReference>
<dbReference type="EMBL" id="AF007134">
    <property type="protein sequence ID" value="AAC19150.1"/>
    <property type="molecule type" value="mRNA"/>
</dbReference>
<dbReference type="CCDS" id="CCDS7916.1"/>
<dbReference type="RefSeq" id="NP_005447.1">
    <property type="nucleotide sequence ID" value="NM_005456.4"/>
</dbReference>
<dbReference type="PDB" id="2G01">
    <property type="method" value="X-ray"/>
    <property type="resolution" value="3.50 A"/>
    <property type="chains" value="F/G=157-167"/>
</dbReference>
<dbReference type="PDB" id="2GMX">
    <property type="method" value="X-ray"/>
    <property type="resolution" value="3.50 A"/>
    <property type="chains" value="F/G=157-167"/>
</dbReference>
<dbReference type="PDB" id="2H96">
    <property type="method" value="X-ray"/>
    <property type="resolution" value="3.00 A"/>
    <property type="chains" value="F/G=157-167"/>
</dbReference>
<dbReference type="PDB" id="3OXI">
    <property type="method" value="X-ray"/>
    <property type="resolution" value="2.20 A"/>
    <property type="chains" value="J=158-167"/>
</dbReference>
<dbReference type="PDB" id="3PTG">
    <property type="method" value="X-ray"/>
    <property type="resolution" value="2.43 A"/>
    <property type="chains" value="J=157-167"/>
</dbReference>
<dbReference type="PDB" id="3VUD">
    <property type="method" value="X-ray"/>
    <property type="resolution" value="3.50 A"/>
    <property type="chains" value="F=157-167"/>
</dbReference>
<dbReference type="PDB" id="3VUG">
    <property type="method" value="X-ray"/>
    <property type="resolution" value="3.24 A"/>
    <property type="chains" value="F=157-167"/>
</dbReference>
<dbReference type="PDB" id="3VUH">
    <property type="method" value="X-ray"/>
    <property type="resolution" value="2.70 A"/>
    <property type="chains" value="F=157-167"/>
</dbReference>
<dbReference type="PDB" id="3VUI">
    <property type="method" value="X-ray"/>
    <property type="resolution" value="2.80 A"/>
    <property type="chains" value="F=157-167"/>
</dbReference>
<dbReference type="PDB" id="3VUK">
    <property type="method" value="X-ray"/>
    <property type="resolution" value="2.95 A"/>
    <property type="chains" value="F=157-167"/>
</dbReference>
<dbReference type="PDB" id="3VUL">
    <property type="method" value="X-ray"/>
    <property type="resolution" value="2.81 A"/>
    <property type="chains" value="F=157-167"/>
</dbReference>
<dbReference type="PDB" id="3VUM">
    <property type="method" value="X-ray"/>
    <property type="resolution" value="2.69 A"/>
    <property type="chains" value="F=157-167"/>
</dbReference>
<dbReference type="PDB" id="4E73">
    <property type="method" value="X-ray"/>
    <property type="resolution" value="2.27 A"/>
    <property type="chains" value="B=158-167"/>
</dbReference>
<dbReference type="PDB" id="4G1W">
    <property type="method" value="X-ray"/>
    <property type="resolution" value="2.45 A"/>
    <property type="chains" value="B=157-167"/>
</dbReference>
<dbReference type="PDB" id="4H39">
    <property type="method" value="X-ray"/>
    <property type="resolution" value="1.99 A"/>
    <property type="chains" value="B=158-167"/>
</dbReference>
<dbReference type="PDB" id="4HYS">
    <property type="method" value="X-ray"/>
    <property type="resolution" value="2.42 A"/>
    <property type="chains" value="B=157-167"/>
</dbReference>
<dbReference type="PDB" id="4HYU">
    <property type="method" value="X-ray"/>
    <property type="resolution" value="2.15 A"/>
    <property type="chains" value="B=157-167"/>
</dbReference>
<dbReference type="PDB" id="4IZY">
    <property type="method" value="X-ray"/>
    <property type="resolution" value="2.30 A"/>
    <property type="chains" value="B=157-167"/>
</dbReference>
<dbReference type="PDB" id="5LW1">
    <property type="method" value="X-ray"/>
    <property type="resolution" value="3.20 A"/>
    <property type="chains" value="C/F/I=157-167"/>
</dbReference>
<dbReference type="PDB" id="6FUZ">
    <property type="method" value="X-ray"/>
    <property type="resolution" value="2.70 A"/>
    <property type="chains" value="A=701-711"/>
</dbReference>
<dbReference type="PDB" id="7NYK">
    <property type="method" value="X-ray"/>
    <property type="resolution" value="1.45 A"/>
    <property type="chains" value="AAA/BBB/CCC/DDD=490-549"/>
</dbReference>
<dbReference type="PDB" id="7NYL">
    <property type="method" value="X-ray"/>
    <property type="resolution" value="1.95 A"/>
    <property type="chains" value="AAA/BBB=490-549"/>
</dbReference>
<dbReference type="PDB" id="7NYM">
    <property type="method" value="X-ray"/>
    <property type="resolution" value="1.61 A"/>
    <property type="chains" value="AAA/BBB/CCC/DDD=490-549"/>
</dbReference>
<dbReference type="PDB" id="7NYN">
    <property type="method" value="X-ray"/>
    <property type="resolution" value="1.54 A"/>
    <property type="chains" value="AAA/BBB/CCC/DDD/EEE/FFF/GGG/HHH/III/JJJ/KKK/LLL=490-549"/>
</dbReference>
<dbReference type="PDB" id="7NYO">
    <property type="method" value="X-ray"/>
    <property type="resolution" value="1.40 A"/>
    <property type="chains" value="AAA/BBB/CCC/DDD=490-549"/>
</dbReference>
<dbReference type="PDB" id="7NZB">
    <property type="method" value="X-ray"/>
    <property type="resolution" value="1.96 A"/>
    <property type="chains" value="AAA/BBB/CCC/DDD/EEE/FFF/GGG/HHH/III/JJJ/KKK/LLL=490-549"/>
</dbReference>
<dbReference type="PDB" id="8RPP">
    <property type="method" value="X-ray"/>
    <property type="resolution" value="1.87 A"/>
    <property type="chains" value="D=490-547"/>
</dbReference>
<dbReference type="PDBsum" id="2G01"/>
<dbReference type="PDBsum" id="2GMX"/>
<dbReference type="PDBsum" id="2H96"/>
<dbReference type="PDBsum" id="3OXI"/>
<dbReference type="PDBsum" id="3PTG"/>
<dbReference type="PDBsum" id="3VUD"/>
<dbReference type="PDBsum" id="3VUG"/>
<dbReference type="PDBsum" id="3VUH"/>
<dbReference type="PDBsum" id="3VUI"/>
<dbReference type="PDBsum" id="3VUK"/>
<dbReference type="PDBsum" id="3VUL"/>
<dbReference type="PDBsum" id="3VUM"/>
<dbReference type="PDBsum" id="4E73"/>
<dbReference type="PDBsum" id="4G1W"/>
<dbReference type="PDBsum" id="4H39"/>
<dbReference type="PDBsum" id="4HYS"/>
<dbReference type="PDBsum" id="4HYU"/>
<dbReference type="PDBsum" id="4IZY"/>
<dbReference type="PDBsum" id="5LW1"/>
<dbReference type="PDBsum" id="6FUZ"/>
<dbReference type="PDBsum" id="7NYK"/>
<dbReference type="PDBsum" id="7NYL"/>
<dbReference type="PDBsum" id="7NYM"/>
<dbReference type="PDBsum" id="7NYN"/>
<dbReference type="PDBsum" id="7NYO"/>
<dbReference type="PDBsum" id="7NZB"/>
<dbReference type="PDBsum" id="8RPP"/>
<dbReference type="SMR" id="Q9UQF2"/>
<dbReference type="BioGRID" id="114864">
    <property type="interactions" value="55"/>
</dbReference>
<dbReference type="CORUM" id="Q9UQF2"/>
<dbReference type="ELM" id="Q9UQF2"/>
<dbReference type="FunCoup" id="Q9UQF2">
    <property type="interactions" value="832"/>
</dbReference>
<dbReference type="IntAct" id="Q9UQF2">
    <property type="interactions" value="34"/>
</dbReference>
<dbReference type="MINT" id="Q9UQF2"/>
<dbReference type="STRING" id="9606.ENSP00000241014"/>
<dbReference type="DrugBank" id="DB07276">
    <property type="generic name" value="5-CYANO-N-(2,5-DIMETHOXYBENZYL)-6-ETHOXYPYRIDINE-2-CARBOXAMIDE"/>
</dbReference>
<dbReference type="DrugBank" id="DB07218">
    <property type="generic name" value="6-CHLORO-9-HYDROXY-1,3-DIMETHYL-1,9-DIHYDRO-4H-PYRAZOLO[3,4-B]QUINOLIN-4-ONE"/>
</dbReference>
<dbReference type="DrugBank" id="DB11157">
    <property type="generic name" value="Anthralin"/>
</dbReference>
<dbReference type="DrugBank" id="DB07272">
    <property type="generic name" value="N-(4-AMINO-5-CYANO-6-ETHOXYPYRIDIN-2-YL)-2-(4-BROMO-2,5-DIMETHOXYPHENYL)ACETAMIDE"/>
</dbReference>
<dbReference type="DrugBank" id="DB01782">
    <property type="generic name" value="Pyrazolanthrone"/>
</dbReference>
<dbReference type="TCDB" id="8.A.238.1.1">
    <property type="family name" value="the cell permeabiity peptide (cpp) family"/>
</dbReference>
<dbReference type="GlyCosmos" id="Q9UQF2">
    <property type="glycosylation" value="1 site, 1 glycan"/>
</dbReference>
<dbReference type="GlyGen" id="Q9UQF2">
    <property type="glycosylation" value="2 sites, 1 O-linked glycan (1 site)"/>
</dbReference>
<dbReference type="iPTMnet" id="Q9UQF2"/>
<dbReference type="PhosphoSitePlus" id="Q9UQF2"/>
<dbReference type="BioMuta" id="MAPK8IP1"/>
<dbReference type="DMDM" id="17433093"/>
<dbReference type="MassIVE" id="Q9UQF2"/>
<dbReference type="PaxDb" id="9606-ENSP00000241014"/>
<dbReference type="PeptideAtlas" id="Q9UQF2"/>
<dbReference type="ProteomicsDB" id="85551"/>
<dbReference type="Antibodypedia" id="26197">
    <property type="antibodies" value="297 antibodies from 34 providers"/>
</dbReference>
<dbReference type="DNASU" id="9479"/>
<dbReference type="Ensembl" id="ENST00000241014.6">
    <property type="protein sequence ID" value="ENSP00000241014.2"/>
    <property type="gene ID" value="ENSG00000121653.11"/>
</dbReference>
<dbReference type="GeneID" id="9479"/>
<dbReference type="KEGG" id="hsa:9479"/>
<dbReference type="MANE-Select" id="ENST00000241014.6">
    <property type="protein sequence ID" value="ENSP00000241014.2"/>
    <property type="RefSeq nucleotide sequence ID" value="NM_005456.4"/>
    <property type="RefSeq protein sequence ID" value="NP_005447.1"/>
</dbReference>
<dbReference type="UCSC" id="uc001nbr.4">
    <property type="organism name" value="human"/>
</dbReference>
<dbReference type="AGR" id="HGNC:6882"/>
<dbReference type="CTD" id="9479"/>
<dbReference type="DisGeNET" id="9479"/>
<dbReference type="GeneCards" id="MAPK8IP1"/>
<dbReference type="HGNC" id="HGNC:6882">
    <property type="gene designation" value="MAPK8IP1"/>
</dbReference>
<dbReference type="HPA" id="ENSG00000121653">
    <property type="expression patterns" value="Group enriched (brain, pituitary gland)"/>
</dbReference>
<dbReference type="MalaCards" id="MAPK8IP1"/>
<dbReference type="MIM" id="125853">
    <property type="type" value="phenotype"/>
</dbReference>
<dbReference type="MIM" id="604641">
    <property type="type" value="gene"/>
</dbReference>
<dbReference type="neXtProt" id="NX_Q9UQF2"/>
<dbReference type="OpenTargets" id="ENSG00000121653"/>
<dbReference type="PharmGKB" id="PA30626"/>
<dbReference type="VEuPathDB" id="HostDB:ENSG00000121653"/>
<dbReference type="eggNOG" id="KOG3775">
    <property type="taxonomic scope" value="Eukaryota"/>
</dbReference>
<dbReference type="GeneTree" id="ENSGT00940000157089"/>
<dbReference type="HOGENOM" id="CLU_006711_1_1_1"/>
<dbReference type="InParanoid" id="Q9UQF2"/>
<dbReference type="OMA" id="GHHRERI"/>
<dbReference type="OrthoDB" id="5965083at2759"/>
<dbReference type="PAN-GO" id="Q9UQF2">
    <property type="GO annotations" value="2 GO annotations based on evolutionary models"/>
</dbReference>
<dbReference type="PhylomeDB" id="Q9UQF2"/>
<dbReference type="TreeFam" id="TF325073"/>
<dbReference type="PathwayCommons" id="Q9UQF2"/>
<dbReference type="SignaLink" id="Q9UQF2"/>
<dbReference type="SIGNOR" id="Q9UQF2"/>
<dbReference type="BioGRID-ORCS" id="9479">
    <property type="hits" value="23 hits in 1163 CRISPR screens"/>
</dbReference>
<dbReference type="ChiTaRS" id="MAPK8IP1">
    <property type="organism name" value="human"/>
</dbReference>
<dbReference type="EvolutionaryTrace" id="Q9UQF2"/>
<dbReference type="GeneWiki" id="MAPK8IP1"/>
<dbReference type="GenomeRNAi" id="9479"/>
<dbReference type="Pharos" id="Q9UQF2">
    <property type="development level" value="Tbio"/>
</dbReference>
<dbReference type="PRO" id="PR:Q9UQF2"/>
<dbReference type="Proteomes" id="UP000005640">
    <property type="component" value="Chromosome 11"/>
</dbReference>
<dbReference type="RNAct" id="Q9UQF2">
    <property type="molecule type" value="protein"/>
</dbReference>
<dbReference type="Bgee" id="ENSG00000121653">
    <property type="expression patterns" value="Expressed in C1 segment of cervical spinal cord and 109 other cell types or tissues"/>
</dbReference>
<dbReference type="ExpressionAtlas" id="Q9UQF2">
    <property type="expression patterns" value="baseline and differential"/>
</dbReference>
<dbReference type="GO" id="GO:0044295">
    <property type="term" value="C:axonal growth cone"/>
    <property type="evidence" value="ECO:0007669"/>
    <property type="project" value="Ensembl"/>
</dbReference>
<dbReference type="GO" id="GO:0005737">
    <property type="term" value="C:cytoplasm"/>
    <property type="evidence" value="ECO:0000314"/>
    <property type="project" value="UniProtKB"/>
</dbReference>
<dbReference type="GO" id="GO:0005829">
    <property type="term" value="C:cytosol"/>
    <property type="evidence" value="ECO:0007669"/>
    <property type="project" value="Ensembl"/>
</dbReference>
<dbReference type="GO" id="GO:0044294">
    <property type="term" value="C:dendritic growth cone"/>
    <property type="evidence" value="ECO:0007669"/>
    <property type="project" value="Ensembl"/>
</dbReference>
<dbReference type="GO" id="GO:0044302">
    <property type="term" value="C:dentate gyrus mossy fiber"/>
    <property type="evidence" value="ECO:0007669"/>
    <property type="project" value="Ensembl"/>
</dbReference>
<dbReference type="GO" id="GO:0005789">
    <property type="term" value="C:endoplasmic reticulum membrane"/>
    <property type="evidence" value="ECO:0007669"/>
    <property type="project" value="UniProtKB-SubCell"/>
</dbReference>
<dbReference type="GO" id="GO:0031966">
    <property type="term" value="C:mitochondrial membrane"/>
    <property type="evidence" value="ECO:0007669"/>
    <property type="project" value="UniProtKB-SubCell"/>
</dbReference>
<dbReference type="GO" id="GO:0043025">
    <property type="term" value="C:neuronal cell body"/>
    <property type="evidence" value="ECO:0007669"/>
    <property type="project" value="Ensembl"/>
</dbReference>
<dbReference type="GO" id="GO:0005634">
    <property type="term" value="C:nucleus"/>
    <property type="evidence" value="ECO:0007669"/>
    <property type="project" value="UniProtKB-SubCell"/>
</dbReference>
<dbReference type="GO" id="GO:0048471">
    <property type="term" value="C:perinuclear region of cytoplasm"/>
    <property type="evidence" value="ECO:0007669"/>
    <property type="project" value="UniProtKB-SubCell"/>
</dbReference>
<dbReference type="GO" id="GO:0005886">
    <property type="term" value="C:plasma membrane"/>
    <property type="evidence" value="ECO:0000314"/>
    <property type="project" value="HPA"/>
</dbReference>
<dbReference type="GO" id="GO:0045202">
    <property type="term" value="C:synapse"/>
    <property type="evidence" value="ECO:0007669"/>
    <property type="project" value="Ensembl"/>
</dbReference>
<dbReference type="GO" id="GO:0008432">
    <property type="term" value="F:JUN kinase binding"/>
    <property type="evidence" value="ECO:0000318"/>
    <property type="project" value="GO_Central"/>
</dbReference>
<dbReference type="GO" id="GO:0019894">
    <property type="term" value="F:kinesin binding"/>
    <property type="evidence" value="ECO:0000353"/>
    <property type="project" value="UniProtKB"/>
</dbReference>
<dbReference type="GO" id="GO:0005078">
    <property type="term" value="F:MAP-kinase scaffold activity"/>
    <property type="evidence" value="ECO:0000353"/>
    <property type="project" value="UniProtKB"/>
</dbReference>
<dbReference type="GO" id="GO:0031434">
    <property type="term" value="F:mitogen-activated protein kinase kinase binding"/>
    <property type="evidence" value="ECO:0007669"/>
    <property type="project" value="Ensembl"/>
</dbReference>
<dbReference type="GO" id="GO:0031435">
    <property type="term" value="F:mitogen-activated protein kinase kinase kinase binding"/>
    <property type="evidence" value="ECO:0007669"/>
    <property type="project" value="Ensembl"/>
</dbReference>
<dbReference type="GO" id="GO:0004860">
    <property type="term" value="F:protein kinase inhibitor activity"/>
    <property type="evidence" value="ECO:0000304"/>
    <property type="project" value="ProtInc"/>
</dbReference>
<dbReference type="GO" id="GO:0007254">
    <property type="term" value="P:JNK cascade"/>
    <property type="evidence" value="ECO:0000318"/>
    <property type="project" value="GO_Central"/>
</dbReference>
<dbReference type="GO" id="GO:2001243">
    <property type="term" value="P:negative regulation of intrinsic apoptotic signaling pathway"/>
    <property type="evidence" value="ECO:0007669"/>
    <property type="project" value="Ensembl"/>
</dbReference>
<dbReference type="GO" id="GO:0043508">
    <property type="term" value="P:negative regulation of JUN kinase activity"/>
    <property type="evidence" value="ECO:0000250"/>
    <property type="project" value="UniProtKB"/>
</dbReference>
<dbReference type="GO" id="GO:0046330">
    <property type="term" value="P:positive regulation of JNK cascade"/>
    <property type="evidence" value="ECO:0000250"/>
    <property type="project" value="UniProtKB"/>
</dbReference>
<dbReference type="GO" id="GO:2000564">
    <property type="term" value="P:regulation of CD8-positive, alpha-beta T cell proliferation"/>
    <property type="evidence" value="ECO:0000250"/>
    <property type="project" value="UniProtKB"/>
</dbReference>
<dbReference type="GO" id="GO:0006355">
    <property type="term" value="P:regulation of DNA-templated transcription"/>
    <property type="evidence" value="ECO:0007669"/>
    <property type="project" value="Ensembl"/>
</dbReference>
<dbReference type="GO" id="GO:0046328">
    <property type="term" value="P:regulation of JNK cascade"/>
    <property type="evidence" value="ECO:0000250"/>
    <property type="project" value="UniProtKB"/>
</dbReference>
<dbReference type="GO" id="GO:0016192">
    <property type="term" value="P:vesicle-mediated transport"/>
    <property type="evidence" value="ECO:0000250"/>
    <property type="project" value="UniProtKB"/>
</dbReference>
<dbReference type="CDD" id="cd01212">
    <property type="entry name" value="PTB_JIP"/>
    <property type="match status" value="1"/>
</dbReference>
<dbReference type="CDD" id="cd11943">
    <property type="entry name" value="SH3_JIP1"/>
    <property type="match status" value="1"/>
</dbReference>
<dbReference type="FunFam" id="2.30.29.30:FF:000108">
    <property type="entry name" value="C-Jun-amino-terminal kinase-interacting protein 1 isoform X2"/>
    <property type="match status" value="1"/>
</dbReference>
<dbReference type="FunFam" id="2.30.30.40:FF:000032">
    <property type="entry name" value="Putative C-Jun-amino-terminal kinase-interacting protein 2"/>
    <property type="match status" value="1"/>
</dbReference>
<dbReference type="Gene3D" id="2.30.29.30">
    <property type="entry name" value="Pleckstrin-homology domain (PH domain)/Phosphotyrosine-binding domain (PTB)"/>
    <property type="match status" value="1"/>
</dbReference>
<dbReference type="Gene3D" id="2.30.30.40">
    <property type="entry name" value="SH3 Domains"/>
    <property type="match status" value="1"/>
</dbReference>
<dbReference type="IDEAL" id="IID00227"/>
<dbReference type="InterPro" id="IPR047178">
    <property type="entry name" value="JIP1_scaffold"/>
</dbReference>
<dbReference type="InterPro" id="IPR035638">
    <property type="entry name" value="JIP1_SH3"/>
</dbReference>
<dbReference type="InterPro" id="IPR011993">
    <property type="entry name" value="PH-like_dom_sf"/>
</dbReference>
<dbReference type="InterPro" id="IPR006020">
    <property type="entry name" value="PTB/PI_dom"/>
</dbReference>
<dbReference type="InterPro" id="IPR036028">
    <property type="entry name" value="SH3-like_dom_sf"/>
</dbReference>
<dbReference type="InterPro" id="IPR001452">
    <property type="entry name" value="SH3_domain"/>
</dbReference>
<dbReference type="PANTHER" id="PTHR47437:SF3">
    <property type="entry name" value="C-JUN-AMINO-TERMINAL KINASE-INTERACTING PROTEIN 1"/>
    <property type="match status" value="1"/>
</dbReference>
<dbReference type="PANTHER" id="PTHR47437">
    <property type="entry name" value="JNK-INTERACTING PROTEIN 1-LIKE PROTEIN"/>
    <property type="match status" value="1"/>
</dbReference>
<dbReference type="Pfam" id="PF00640">
    <property type="entry name" value="PID"/>
    <property type="match status" value="1"/>
</dbReference>
<dbReference type="Pfam" id="PF14604">
    <property type="entry name" value="SH3_9"/>
    <property type="match status" value="1"/>
</dbReference>
<dbReference type="SMART" id="SM00462">
    <property type="entry name" value="PTB"/>
    <property type="match status" value="1"/>
</dbReference>
<dbReference type="SMART" id="SM00326">
    <property type="entry name" value="SH3"/>
    <property type="match status" value="1"/>
</dbReference>
<dbReference type="SUPFAM" id="SSF50729">
    <property type="entry name" value="PH domain-like"/>
    <property type="match status" value="1"/>
</dbReference>
<dbReference type="SUPFAM" id="SSF50044">
    <property type="entry name" value="SH3-domain"/>
    <property type="match status" value="1"/>
</dbReference>
<dbReference type="PROSITE" id="PS01179">
    <property type="entry name" value="PID"/>
    <property type="match status" value="1"/>
</dbReference>
<dbReference type="PROSITE" id="PS50002">
    <property type="entry name" value="SH3"/>
    <property type="match status" value="1"/>
</dbReference>
<reference key="1">
    <citation type="journal article" date="1999" name="Genomics">
        <title>Genomic organization, fine-mapping, and expression of the human islet-brain 1 (IB1)/C-jun-amino-terminal kinase interacting protein-1 (JIP-1) gene.</title>
        <authorList>
            <person name="Mooser V."/>
            <person name="Maillard A."/>
            <person name="Bonny C."/>
            <person name="Steinmann M."/>
            <person name="Shaw P."/>
            <person name="Yarnall D.P."/>
            <person name="Burns D.K."/>
            <person name="Schorderet D.F."/>
            <person name="Nicod P."/>
            <person name="Waeber G."/>
        </authorList>
    </citation>
    <scope>NUCLEOTIDE SEQUENCE [MRNA]</scope>
    <source>
        <tissue>Insulinoma</tissue>
    </source>
</reference>
<reference key="2">
    <citation type="submission" date="2005-09" db="EMBL/GenBank/DDBJ databases">
        <authorList>
            <person name="Mural R.J."/>
            <person name="Istrail S."/>
            <person name="Sutton G.G."/>
            <person name="Florea L."/>
            <person name="Halpern A.L."/>
            <person name="Mobarry C.M."/>
            <person name="Lippert R."/>
            <person name="Walenz B."/>
            <person name="Shatkay H."/>
            <person name="Dew I."/>
            <person name="Miller J.R."/>
            <person name="Flanigan M.J."/>
            <person name="Edwards N.J."/>
            <person name="Bolanos R."/>
            <person name="Fasulo D."/>
            <person name="Halldorsson B.V."/>
            <person name="Hannenhalli S."/>
            <person name="Turner R."/>
            <person name="Yooseph S."/>
            <person name="Lu F."/>
            <person name="Nusskern D.R."/>
            <person name="Shue B.C."/>
            <person name="Zheng X.H."/>
            <person name="Zhong F."/>
            <person name="Delcher A.L."/>
            <person name="Huson D.H."/>
            <person name="Kravitz S.A."/>
            <person name="Mouchard L."/>
            <person name="Reinert K."/>
            <person name="Remington K.A."/>
            <person name="Clark A.G."/>
            <person name="Waterman M.S."/>
            <person name="Eichler E.E."/>
            <person name="Adams M.D."/>
            <person name="Hunkapiller M.W."/>
            <person name="Myers E.W."/>
            <person name="Venter J.C."/>
        </authorList>
    </citation>
    <scope>NUCLEOTIDE SEQUENCE [LARGE SCALE GENOMIC DNA]</scope>
</reference>
<reference key="3">
    <citation type="submission" date="1997-06" db="EMBL/GenBank/DDBJ databases">
        <authorList>
            <person name="Yu W."/>
            <person name="Sarginson J."/>
            <person name="Gibbs R.A."/>
        </authorList>
    </citation>
    <scope>NUCLEOTIDE SEQUENCE [LARGE SCALE MRNA] OF 468-711</scope>
    <source>
        <tissue>Brain</tissue>
    </source>
</reference>
<reference key="4">
    <citation type="journal article" date="1999" name="J. Biol. Chem.">
        <title>Interaction of c-Jun amino-terminal kinase interacting protein-1 with p190 rhoGEF and its localization in differentiated neurons.</title>
        <authorList>
            <person name="Meyer D."/>
            <person name="Liu A."/>
            <person name="Margolis B."/>
        </authorList>
    </citation>
    <scope>INTERACTION WITH ARHGEF28</scope>
    <scope>SUBCELLULAR LOCATION</scope>
</reference>
<reference key="5">
    <citation type="journal article" date="2001" name="J. Cell Biol.">
        <title>Cargo of kinesin identified as JIP scaffolding proteins and associated signaling molecules.</title>
        <authorList>
            <person name="Verhey K.J."/>
            <person name="Meyer D."/>
            <person name="Deehan R."/>
            <person name="Blenis J."/>
            <person name="Schnapp B.J."/>
            <person name="Rapoport T.A."/>
            <person name="Margolis B."/>
        </authorList>
    </citation>
    <scope>MUTAGENESIS</scope>
    <scope>INTERACTION WITH KINESIN</scope>
</reference>
<reference key="6">
    <citation type="journal article" date="2001" name="J. Biochem.">
        <title>Mixed lineage kinase LZK forms a functional signaling complex with JIP-1, a scaffold protein of the c-Jun NH(2)-terminal kinase pathway.</title>
        <authorList>
            <person name="Ikeda A."/>
            <person name="Hasegawa K."/>
            <person name="Masaki M."/>
            <person name="Moriguchi T."/>
            <person name="Nishida E."/>
            <person name="Kozutsumi Y."/>
            <person name="Oka S."/>
            <person name="Kawasaki T."/>
        </authorList>
    </citation>
    <scope>INTERACTION WITH MAP3K13</scope>
</reference>
<reference key="7">
    <citation type="journal article" date="2002" name="J. Biol. Chem.">
        <title>Interaction of Alzheimer's beta-amyloid precursor family proteins with scaffold proteins of the JNK signaling cascade.</title>
        <authorList>
            <person name="Taru H."/>
            <person name="Iijima K."/>
            <person name="Hase M."/>
            <person name="Kirino Y."/>
            <person name="Yagi Y."/>
            <person name="Suzuki T."/>
        </authorList>
    </citation>
    <scope>INTERACTION WITH APP</scope>
</reference>
<reference key="8">
    <citation type="journal article" date="2003" name="J. Biol. Chem.">
        <title>Recruitment of JNK to JIP1 and JNK-dependent JIP1 phosphorylation regulates JNK module dynamics and activation.</title>
        <authorList>
            <person name="Nihalani D."/>
            <person name="Wong H.N."/>
            <person name="Holzman L.B."/>
        </authorList>
    </citation>
    <scope>PHOSPHORYLATION AT THR-103 AND THR-205</scope>
    <scope>MUTAGENESIS OF ARG-160 AND PRO-161</scope>
</reference>
<reference key="9">
    <citation type="journal article" date="2001" name="Diabetes">
        <title>Cell-permeable peptide inhibitors of JNK: novel blockers of beta-cell death.</title>
        <authorList>
            <person name="Bonny C."/>
            <person name="Oberson A."/>
            <person name="Negri S."/>
            <person name="Sauser C."/>
            <person name="Schorderet D.F."/>
        </authorList>
    </citation>
    <scope>PEPTIDE INHIBITORS OF JNK</scope>
</reference>
<reference key="10">
    <citation type="journal article" date="2003" name="J. Biol. Chem.">
        <title>Calcium- and proteasome-dependent degradation of the JNK scaffold protein islet-brain 1.</title>
        <authorList>
            <person name="Allaman-Pillet N."/>
            <person name="Storling J."/>
            <person name="Oberson A."/>
            <person name="Roduit R."/>
            <person name="Negri S."/>
            <person name="Sauser C."/>
            <person name="Nicod P."/>
            <person name="Beckmann J.S."/>
            <person name="Schorderet D.F."/>
            <person name="Mandrup-Poulsen T."/>
            <person name="Bonny C."/>
        </authorList>
    </citation>
    <scope>CALCIUM- AND PROTEASOME-DEPENDENT DEGRADATION</scope>
</reference>
<reference key="11">
    <citation type="journal article" date="2003" name="Nat. Med.">
        <title>A peptide inhibitor of c-Jun N-terminal kinase protects against excitotoxicity and cerebral ischemia.</title>
        <authorList>
            <person name="Borsello T."/>
            <person name="Clarke P.G."/>
            <person name="Hirt L."/>
            <person name="Vercelli A."/>
            <person name="Repici M."/>
            <person name="Schorderet D.F."/>
            <person name="Bogousslavsky J."/>
            <person name="Bonny C."/>
        </authorList>
    </citation>
    <scope>PROTECTION AGAINST EXCITOTOXICITY AND CEREBRAL ISCHEMIA</scope>
</reference>
<reference key="12">
    <citation type="journal article" date="2006" name="Mol. Cell. Proteomics">
        <title>Hyperphosphorylation of JNK-interacting protein 1, a protein associated with Alzheimer disease.</title>
        <authorList>
            <person name="D'Ambrosio C."/>
            <person name="Arena S."/>
            <person name="Fulcoli G."/>
            <person name="Scheinfeld M.H."/>
            <person name="Zhou D."/>
            <person name="D'Adamio L."/>
            <person name="Scaloni A."/>
        </authorList>
    </citation>
    <scope>PHOSPHORYLATION AT SER-40; SER-152; SER-181; SER-187; SER-193; SER-195; SER-196; SER-214; SER-311; SER-328; SER-330; SER-340; SER-355; SER-366; SER-369; SER-407; SER-409; THR-411; SER-444; SER-447; THR-448; SER-469; SER-471; SER-472 AND SER-473</scope>
</reference>
<reference key="13">
    <citation type="journal article" date="2007" name="Mol. Cell. Biol.">
        <title>Vaccinia-related kinase 2 modulates the stress response to hypoxia mediated by TAK1.</title>
        <authorList>
            <person name="Blanco S."/>
            <person name="Santos C."/>
            <person name="Lazo P.A."/>
        </authorList>
    </citation>
    <scope>INTERACTION WITH MAP3K7</scope>
</reference>
<reference key="14">
    <citation type="journal article" date="2008" name="PLoS ONE">
        <title>Modulation of interleukin-1 transcriptional response by the interaction between VRK2 and the JIP1 scaffold protein.</title>
        <authorList>
            <person name="Blanco S."/>
            <person name="Sanz-Garcia M."/>
            <person name="Santos C.R."/>
            <person name="Lazo P.A."/>
        </authorList>
    </citation>
    <scope>SUBCELLULAR LOCATION</scope>
    <scope>INTERACTION WITH VRK2</scope>
    <scope>PHOSPHORYLATION</scope>
</reference>
<reference key="15">
    <citation type="journal article" date="2000" name="Nat. Genet.">
        <title>The gene, MAPK8IP1, encoding islet-brain-1, is a candidate for type 2 diabetes.</title>
        <authorList>
            <person name="Waeber G."/>
            <person name="Delplanque J."/>
            <person name="Bonny C."/>
            <person name="Mooser V."/>
            <person name="Steinmann M."/>
            <person name="Widmann C."/>
            <person name="Maillard A."/>
            <person name="Miklossy J."/>
            <person name="Dina C."/>
            <person name="Hani E.H."/>
            <person name="Vionnet N."/>
            <person name="Nicod P."/>
            <person name="Boutin P."/>
            <person name="Froguel P."/>
        </authorList>
    </citation>
    <scope>VARIANT T2D ASN-59</scope>
</reference>
<comment type="function">
    <text evidence="3">The JNK-interacting protein (JIP) group of scaffold proteins selectively mediates JNK signaling by aggregating specific components of the MAPK cascade to form a functional JNK signaling module. Required for JNK activation in response to excitotoxic stress. Cytoplasmic MAPK8IP1 causes inhibition of JNK-regulated activity by retaining JNK in the cytoplasm and inhibiting JNK phosphorylation of c-Jun. May also participate in ApoER2-specific reelin signaling. Directly, or indirectly, regulates GLUT2 gene expression and beta-cell function. Appears to have a role in cell signaling in mature and developing nerve terminals. May function as a regulator of vesicle transport, through interactions with the JNK-signaling components and motor proteins. Functions as an anti-apoptotic protein and whose level seems to influence the beta-cell death or survival response. Acts as a scaffold protein that coordinates with SH3RF1 in organizing different components of the JNK pathway, including RAC1 or RAC2, MAP3K11/MLK3 or MAP3K7/TAK1, MAP2K7/MKK7, MAPK8/JNK1 and/or MAPK9/JNK2 into a functional multiprotein complex to ensure the effective activation of the JNK signaling pathway. Regulates the activation of MAPK8/JNK1 and differentiation of CD8(+) T-cells.</text>
</comment>
<comment type="subunit">
    <text evidence="2 3 7 9 10 11 14 15">Forms homo- or heterooligomeric complexes. Binds specific components of the JNK signaling pathway namely, MAPK8/JNK1, MAPK9/JNK2, MAPK10/JNK3, MAP2K7/MKK7, MAP3K11/MLK3 and DLK1. Also binds the proline-rich domain-containing splice variant of apolipoprotein E receptor 2 (ApoER2). Interacts, via the PID domain, with ARHGEF28. Binds the cytoplasmic tails of LRP1 and LRP2 (Megalin). Binds the TPR motif-containing C-terminal of KNS2, then the pre-assembled MAPK8IP1 scaffolding complexes are transported as a cargo of kinesin, to the required subcellular location. Interacts with the cytoplasmic domain of APP. Interacts with DCLK2 (By similarity). Interacts with MAP3K7/TAK1. Interacts with isoform 1 and isoform 2 of VRK2. Found in a complex with SH3RF1, RAC1, MAP3K11/MLK3, MAP2K7/MKK7 and MAPK8/JNK1. Found in a complex with SH3RF1, RAC2, MAP3K7/TAK1, MAP2K7/MKK7, MAPK8/JNK1 and MAPK9/JNK2. Interacts with SH3RF2 (By similarity).</text>
</comment>
<comment type="interaction">
    <interactant intactId="EBI-78404">
        <id>Q9UQF2</id>
    </interactant>
    <interactant intactId="EBI-77613">
        <id>P05067</id>
        <label>APP</label>
    </interactant>
    <organismsDiffer>false</organismsDiffer>
    <experiments>3</experiments>
</comment>
<comment type="interaction">
    <interactant intactId="EBI-78404">
        <id>Q9UQF2</id>
    </interactant>
    <interactant intactId="EBI-297353">
        <id>P00533</id>
        <label>EGFR</label>
    </interactant>
    <organismsDiffer>false</organismsDiffer>
    <experiments>3</experiments>
</comment>
<comment type="interaction">
    <interactant intactId="EBI-78404">
        <id>Q9UQF2</id>
    </interactant>
    <interactant intactId="EBI-641062">
        <id>P04626</id>
        <label>ERBB2</label>
    </interactant>
    <organismsDiffer>false</organismsDiffer>
    <experiments>4</experiments>
</comment>
<comment type="interaction">
    <interactant intactId="EBI-78404">
        <id>Q9UQF2</id>
    </interactant>
    <interactant intactId="EBI-492605">
        <id>O14733</id>
        <label>MAP2K7</label>
    </interactant>
    <organismsDiffer>false</organismsDiffer>
    <experiments>5</experiments>
</comment>
<comment type="interaction">
    <interactant intactId="EBI-78404">
        <id>Q9UQF2</id>
    </interactant>
    <interactant intactId="EBI-358684">
        <id>O43318</id>
        <label>MAP3K7</label>
    </interactant>
    <organismsDiffer>false</organismsDiffer>
    <experiments>11</experiments>
</comment>
<comment type="interaction">
    <interactant intactId="EBI-78404">
        <id>Q9UQF2</id>
    </interactant>
    <interactant intactId="EBI-286483">
        <id>P45983</id>
        <label>MAPK8</label>
    </interactant>
    <organismsDiffer>false</organismsDiffer>
    <experiments>8</experiments>
</comment>
<comment type="interaction">
    <interactant intactId="EBI-78404">
        <id>Q9UQF2</id>
    </interactant>
    <interactant intactId="EBI-78814">
        <id>P12023</id>
        <label>App</label>
    </interactant>
    <organismsDiffer>true</organismsDiffer>
    <experiments>2</experiments>
</comment>
<comment type="subcellular location">
    <subcellularLocation>
        <location evidence="1">Cytoplasm</location>
    </subcellularLocation>
    <subcellularLocation>
        <location evidence="1">Cytoplasm</location>
        <location evidence="1">Perinuclear region</location>
    </subcellularLocation>
    <subcellularLocation>
        <location evidence="1">Nucleus</location>
    </subcellularLocation>
    <subcellularLocation>
        <location>Endoplasmic reticulum membrane</location>
    </subcellularLocation>
    <subcellularLocation>
        <location>Mitochondrion membrane</location>
    </subcellularLocation>
    <text evidence="1">Accumulates in cell surface projections. Under certain stress conditions, translocates to the perinuclear region of neurons. In insulin-secreting cells, detected in both the cytoplasm and nucleus (By similarity).</text>
</comment>
<comment type="tissue specificity">
    <text>Highly expressed in brain. Expressed in neurons, localizing to neurite tips in differentiating cells. Also expressed in the pancreas, testis and prostate. Low levels in heart, ovary and small intestine. Decreased levels in pancreatic beta cells sensitize cells to IL-1-beta-induced apoptosis.</text>
</comment>
<comment type="domain">
    <text>The destruction boxes (D-box) may act as recognition signals for degradation via the ubiquitin-proteasome pathway.</text>
</comment>
<comment type="domain">
    <text>A minimal inhibitory domain prevents pancreatic beta cell apoptosis in vitro, and prevents activation of c-jun by MAPK8, MAPK9 and MAPK10.</text>
</comment>
<comment type="domain">
    <text evidence="1">The SH3 domain mediates homodimerization.</text>
</comment>
<comment type="PTM">
    <text evidence="12">Phosphorylated by MAPK8, MAPK9 and MAPK10. Phosphorylation on Thr-103 is also necessary for the dissociation and activation of MAP3K12. Phosphorylated by isoform 1 and isoform 2 of VRK2. Hyperphosphorylated during mitosis following activation of stress-activated and MAP kinases.</text>
</comment>
<comment type="PTM">
    <text>Ubiquitinated. Two preliminary events are required to prime for ubiquitination; phosphorylation and an increased in intracellular calcium concentration. Then, the calcium influx initiates ubiquitination and degradation by the ubiquitin-proteasome pathway.</text>
</comment>
<comment type="disease" evidence="8">
    <disease id="DI-02060">
        <name>Type 2 diabetes mellitus</name>
        <acronym>T2D</acronym>
        <description>A multifactorial disorder of glucose homeostasis caused by a lack of sensitivity to insulin. Affected individuals usually have an obese body habitus and manifestations of a metabolic syndrome characterized by diabetes, insulin resistance, hypertension and hypertriglyceridemia. The disease results in long-term complications that affect the eyes, kidneys, nerves, and blood vessels.</description>
        <dbReference type="MIM" id="125853"/>
    </disease>
    <text>Disease susceptibility may be associated with variants affecting the gene represented in this entry.</text>
</comment>
<comment type="miscellaneous">
    <text>A chemically synthesized cell-permeable peptide of the minimal inhibitory domain decreases brain lesions in both transient and permanent ischemia. The level of protection is still high when administered 6 or 12 hours after ischemia.</text>
</comment>
<comment type="similarity">
    <text evidence="16">Belongs to the JIP scaffold family.</text>
</comment>
<organism>
    <name type="scientific">Homo sapiens</name>
    <name type="common">Human</name>
    <dbReference type="NCBI Taxonomy" id="9606"/>
    <lineage>
        <taxon>Eukaryota</taxon>
        <taxon>Metazoa</taxon>
        <taxon>Chordata</taxon>
        <taxon>Craniata</taxon>
        <taxon>Vertebrata</taxon>
        <taxon>Euteleostomi</taxon>
        <taxon>Mammalia</taxon>
        <taxon>Eutheria</taxon>
        <taxon>Euarchontoglires</taxon>
        <taxon>Primates</taxon>
        <taxon>Haplorrhini</taxon>
        <taxon>Catarrhini</taxon>
        <taxon>Hominidae</taxon>
        <taxon>Homo</taxon>
    </lineage>
</organism>
<keyword id="KW-0002">3D-structure</keyword>
<keyword id="KW-0963">Cytoplasm</keyword>
<keyword id="KW-0219">Diabetes mellitus</keyword>
<keyword id="KW-0225">Disease variant</keyword>
<keyword id="KW-0256">Endoplasmic reticulum</keyword>
<keyword id="KW-0472">Membrane</keyword>
<keyword id="KW-0496">Mitochondrion</keyword>
<keyword id="KW-0539">Nucleus</keyword>
<keyword id="KW-0597">Phosphoprotein</keyword>
<keyword id="KW-1267">Proteomics identification</keyword>
<keyword id="KW-1185">Reference proteome</keyword>
<keyword id="KW-0677">Repeat</keyword>
<keyword id="KW-0728">SH3 domain</keyword>
<keyword id="KW-0832">Ubl conjugation</keyword>
<accession>Q9UQF2</accession>
<accession>D3DQP4</accession>
<accession>O43407</accession>
<proteinExistence type="evidence at protein level"/>
<name>JIP1_HUMAN</name>
<sequence length="711" mass="77524">MAERESGGLGGGAASPPAASPFLGLHIASPPNFRLTHDISLEEFEDEDLSEITDECGISLQCKDTLSLRPPRAGLLSAGGGGAGSRLQAEMLQMDLIDATGDTPGAEDDEEDDDEERAARRPGAGPPKAESGQEPASRGQGQSQGQSQGPGSGDTYRPKRPTTLNLFPQVPRSQDTLNNNSLGKKHSWQDRVSRSSSPLKTGEQTPPHEHICLSDELPPQSGPAPTTDRGTSTDSPCRRSTATQMAPPGGPPAAPPGGRGHSHRDRIHYQADVRLEATEEIYLTPVQRPPDAAEPTSAFLPPTESRMSVSSDPDPAAYPSTAGRPHPSISEEEEGFDCLSSPERAEPPGGGWRGSLGEPPPPPRASLSSDTSALSYDSVKYTLVVDEHAQLELVSLRPCFGDYSDESDSATVYDNCASVSSPYESAIGEEYEEAPRPQPPACLSEDSTPDEPDVHFSKKFLNVFMSGRSRSSSAESFGLFSCIINGEEQEQTHRAIFRFVPRHEDELELEVDDPLLVELQAEDYWYEAYNMRTGARGVFPAYYAIEVTKEPEHMAALAKNSDWVDQFRVKFLGSVQVPYHKGNDVLCAAMQKIATTRRLTVHFNPPSSCVLEISVRGVKIGVKADDSQEAKGNKCSHFFQLKNISFCGYHPKNNKYFGFITKHPADHRFACHVFVSEDSTKALAESVGRAFQQFYKQFVEYTCPTEDIYLE</sequence>